<protein>
    <recommendedName>
        <fullName evidence="1">Sec-independent protein translocase protein TatB</fullName>
    </recommendedName>
</protein>
<gene>
    <name evidence="1" type="primary">tatB</name>
    <name type="ordered locus">ZMO1219</name>
</gene>
<organism>
    <name type="scientific">Zymomonas mobilis subsp. mobilis (strain ATCC 31821 / ZM4 / CP4)</name>
    <dbReference type="NCBI Taxonomy" id="264203"/>
    <lineage>
        <taxon>Bacteria</taxon>
        <taxon>Pseudomonadati</taxon>
        <taxon>Pseudomonadota</taxon>
        <taxon>Alphaproteobacteria</taxon>
        <taxon>Sphingomonadales</taxon>
        <taxon>Zymomonadaceae</taxon>
        <taxon>Zymomonas</taxon>
    </lineage>
</organism>
<sequence length="152" mass="16466">MFDVAPSELLLVAVVALVVIGPKDLPRAMRVVGRWLGKARKLSRHFRSGIDEMIRQSEMEDMEKRWAEENAKLLAENQGQGNQTASTSSPATPSPVSDDPAEQNIVFTSPADLEVNTADTSHLAANHTETTATTAASTPAKPKEADQQEKQS</sequence>
<proteinExistence type="inferred from homology"/>
<comment type="function">
    <text evidence="1">Part of the twin-arginine translocation (Tat) system that transports large folded proteins containing a characteristic twin-arginine motif in their signal peptide across membranes. Together with TatC, TatB is part of a receptor directly interacting with Tat signal peptides. TatB may form an oligomeric binding site that transiently accommodates folded Tat precursor proteins before their translocation.</text>
</comment>
<comment type="subunit">
    <text evidence="1">The Tat system comprises two distinct complexes: a TatABC complex, containing multiple copies of TatA, TatB and TatC subunits, and a separate TatA complex, containing only TatA subunits. Substrates initially bind to the TatABC complex, which probably triggers association of the separate TatA complex to form the active translocon.</text>
</comment>
<comment type="subcellular location">
    <subcellularLocation>
        <location evidence="1">Cell inner membrane</location>
        <topology evidence="1">Single-pass membrane protein</topology>
    </subcellularLocation>
</comment>
<comment type="similarity">
    <text evidence="1">Belongs to the TatB family.</text>
</comment>
<name>TATB_ZYMMO</name>
<keyword id="KW-0997">Cell inner membrane</keyword>
<keyword id="KW-1003">Cell membrane</keyword>
<keyword id="KW-0472">Membrane</keyword>
<keyword id="KW-0653">Protein transport</keyword>
<keyword id="KW-1185">Reference proteome</keyword>
<keyword id="KW-0811">Translocation</keyword>
<keyword id="KW-0812">Transmembrane</keyword>
<keyword id="KW-1133">Transmembrane helix</keyword>
<keyword id="KW-0813">Transport</keyword>
<accession>Q5NN67</accession>
<reference key="1">
    <citation type="journal article" date="2005" name="Nat. Biotechnol.">
        <title>The genome sequence of the ethanologenic bacterium Zymomonas mobilis ZM4.</title>
        <authorList>
            <person name="Seo J.-S."/>
            <person name="Chong H."/>
            <person name="Park H.S."/>
            <person name="Yoon K.-O."/>
            <person name="Jung C."/>
            <person name="Kim J.J."/>
            <person name="Hong J.H."/>
            <person name="Kim H."/>
            <person name="Kim J.-H."/>
            <person name="Kil J.-I."/>
            <person name="Park C.J."/>
            <person name="Oh H.-M."/>
            <person name="Lee J.-S."/>
            <person name="Jin S.-J."/>
            <person name="Um H.-W."/>
            <person name="Lee H.-J."/>
            <person name="Oh S.-J."/>
            <person name="Kim J.Y."/>
            <person name="Kang H.L."/>
            <person name="Lee S.Y."/>
            <person name="Lee K.J."/>
            <person name="Kang H.S."/>
        </authorList>
    </citation>
    <scope>NUCLEOTIDE SEQUENCE [LARGE SCALE GENOMIC DNA]</scope>
    <source>
        <strain>ATCC 31821 / ZM4 / CP4</strain>
    </source>
</reference>
<reference key="2">
    <citation type="journal article" date="2009" name="Nat. Biotechnol.">
        <title>Improved genome annotation for Zymomonas mobilis.</title>
        <authorList>
            <person name="Yang S."/>
            <person name="Pappas K.M."/>
            <person name="Hauser L.J."/>
            <person name="Land M.L."/>
            <person name="Chen G.L."/>
            <person name="Hurst G.B."/>
            <person name="Pan C."/>
            <person name="Kouvelis V.N."/>
            <person name="Typas M.A."/>
            <person name="Pelletier D.A."/>
            <person name="Klingeman D.M."/>
            <person name="Chang Y.J."/>
            <person name="Samatova N.F."/>
            <person name="Brown S.D."/>
        </authorList>
    </citation>
    <scope>SEQUENCE REVISION TO 8</scope>
</reference>
<feature type="chain" id="PRO_0000301256" description="Sec-independent protein translocase protein TatB">
    <location>
        <begin position="1"/>
        <end position="152"/>
    </location>
</feature>
<feature type="transmembrane region" description="Helical" evidence="1">
    <location>
        <begin position="1"/>
        <end position="21"/>
    </location>
</feature>
<feature type="region of interest" description="Disordered" evidence="2">
    <location>
        <begin position="60"/>
        <end position="152"/>
    </location>
</feature>
<feature type="compositionally biased region" description="Basic and acidic residues" evidence="2">
    <location>
        <begin position="60"/>
        <end position="71"/>
    </location>
</feature>
<feature type="compositionally biased region" description="Low complexity" evidence="2">
    <location>
        <begin position="84"/>
        <end position="98"/>
    </location>
</feature>
<feature type="compositionally biased region" description="Low complexity" evidence="2">
    <location>
        <begin position="124"/>
        <end position="140"/>
    </location>
</feature>
<feature type="compositionally biased region" description="Basic and acidic residues" evidence="2">
    <location>
        <begin position="141"/>
        <end position="152"/>
    </location>
</feature>
<evidence type="ECO:0000255" key="1">
    <source>
        <dbReference type="HAMAP-Rule" id="MF_00237"/>
    </source>
</evidence>
<evidence type="ECO:0000256" key="2">
    <source>
        <dbReference type="SAM" id="MobiDB-lite"/>
    </source>
</evidence>
<dbReference type="EMBL" id="AE008692">
    <property type="protein sequence ID" value="AAV89843.2"/>
    <property type="molecule type" value="Genomic_DNA"/>
</dbReference>
<dbReference type="RefSeq" id="WP_011241037.1">
    <property type="nucleotide sequence ID" value="NZ_CP035711.1"/>
</dbReference>
<dbReference type="SMR" id="Q5NN67"/>
<dbReference type="STRING" id="264203.ZMO1219"/>
<dbReference type="KEGG" id="zmo:ZMO1219"/>
<dbReference type="eggNOG" id="COG1826">
    <property type="taxonomic scope" value="Bacteria"/>
</dbReference>
<dbReference type="HOGENOM" id="CLU_086034_1_3_5"/>
<dbReference type="Proteomes" id="UP000001173">
    <property type="component" value="Chromosome"/>
</dbReference>
<dbReference type="GO" id="GO:0033281">
    <property type="term" value="C:TAT protein transport complex"/>
    <property type="evidence" value="ECO:0007669"/>
    <property type="project" value="UniProtKB-UniRule"/>
</dbReference>
<dbReference type="GO" id="GO:0008320">
    <property type="term" value="F:protein transmembrane transporter activity"/>
    <property type="evidence" value="ECO:0007669"/>
    <property type="project" value="UniProtKB-UniRule"/>
</dbReference>
<dbReference type="GO" id="GO:0043953">
    <property type="term" value="P:protein transport by the Tat complex"/>
    <property type="evidence" value="ECO:0007669"/>
    <property type="project" value="UniProtKB-UniRule"/>
</dbReference>
<dbReference type="Gene3D" id="1.20.5.3310">
    <property type="match status" value="1"/>
</dbReference>
<dbReference type="HAMAP" id="MF_00237">
    <property type="entry name" value="TatB"/>
    <property type="match status" value="1"/>
</dbReference>
<dbReference type="InterPro" id="IPR003369">
    <property type="entry name" value="TatA/B/E"/>
</dbReference>
<dbReference type="InterPro" id="IPR018448">
    <property type="entry name" value="TatB"/>
</dbReference>
<dbReference type="NCBIfam" id="TIGR01410">
    <property type="entry name" value="tatB"/>
    <property type="match status" value="1"/>
</dbReference>
<dbReference type="PANTHER" id="PTHR33162">
    <property type="entry name" value="SEC-INDEPENDENT PROTEIN TRANSLOCASE PROTEIN TATA, CHLOROPLASTIC"/>
    <property type="match status" value="1"/>
</dbReference>
<dbReference type="PANTHER" id="PTHR33162:SF1">
    <property type="entry name" value="SEC-INDEPENDENT PROTEIN TRANSLOCASE PROTEIN TATA, CHLOROPLASTIC"/>
    <property type="match status" value="1"/>
</dbReference>
<dbReference type="Pfam" id="PF02416">
    <property type="entry name" value="TatA_B_E"/>
    <property type="match status" value="1"/>
</dbReference>
<dbReference type="PRINTS" id="PR01506">
    <property type="entry name" value="TATBPROTEIN"/>
</dbReference>